<sequence>MASTSDFKNGLVLQIEGQLWTITEFQHVKPGKGPAFVRTKLKNVLSGKVVDKTFNAGVKVDTATVDRRDMTYLYHDGTDYIFMDGDTYDQISISEATVGDGARFMLENMAVQVATHEDVPLFVELPVTVELVVQHTDPGLQGDRSTGGTKPATLETGAEINVPLFINTGDKLKVDSRDGNYLGRVNS</sequence>
<accession>C1B4I4</accession>
<protein>
    <recommendedName>
        <fullName evidence="1">Elongation factor P</fullName>
        <shortName evidence="1">EF-P</shortName>
    </recommendedName>
</protein>
<keyword id="KW-0963">Cytoplasm</keyword>
<keyword id="KW-0251">Elongation factor</keyword>
<keyword id="KW-0648">Protein biosynthesis</keyword>
<evidence type="ECO:0000255" key="1">
    <source>
        <dbReference type="HAMAP-Rule" id="MF_00141"/>
    </source>
</evidence>
<reference key="1">
    <citation type="submission" date="2009-03" db="EMBL/GenBank/DDBJ databases">
        <title>Comparison of the complete genome sequences of Rhodococcus erythropolis PR4 and Rhodococcus opacus B4.</title>
        <authorList>
            <person name="Takarada H."/>
            <person name="Sekine M."/>
            <person name="Hosoyama A."/>
            <person name="Yamada R."/>
            <person name="Fujisawa T."/>
            <person name="Omata S."/>
            <person name="Shimizu A."/>
            <person name="Tsukatani N."/>
            <person name="Tanikawa S."/>
            <person name="Fujita N."/>
            <person name="Harayama S."/>
        </authorList>
    </citation>
    <scope>NUCLEOTIDE SEQUENCE [LARGE SCALE GENOMIC DNA]</scope>
    <source>
        <strain>B4</strain>
    </source>
</reference>
<name>EFP_RHOOB</name>
<feature type="chain" id="PRO_1000123023" description="Elongation factor P">
    <location>
        <begin position="1"/>
        <end position="187"/>
    </location>
</feature>
<comment type="function">
    <text evidence="1">Involved in peptide bond synthesis. Stimulates efficient translation and peptide-bond synthesis on native or reconstituted 70S ribosomes in vitro. Probably functions indirectly by altering the affinity of the ribosome for aminoacyl-tRNA, thus increasing their reactivity as acceptors for peptidyl transferase.</text>
</comment>
<comment type="pathway">
    <text evidence="1">Protein biosynthesis; polypeptide chain elongation.</text>
</comment>
<comment type="subcellular location">
    <subcellularLocation>
        <location evidence="1">Cytoplasm</location>
    </subcellularLocation>
</comment>
<comment type="similarity">
    <text evidence="1">Belongs to the elongation factor P family.</text>
</comment>
<proteinExistence type="inferred from homology"/>
<organism>
    <name type="scientific">Rhodococcus opacus (strain B4)</name>
    <dbReference type="NCBI Taxonomy" id="632772"/>
    <lineage>
        <taxon>Bacteria</taxon>
        <taxon>Bacillati</taxon>
        <taxon>Actinomycetota</taxon>
        <taxon>Actinomycetes</taxon>
        <taxon>Mycobacteriales</taxon>
        <taxon>Nocardiaceae</taxon>
        <taxon>Rhodococcus</taxon>
    </lineage>
</organism>
<dbReference type="EMBL" id="AP011115">
    <property type="protein sequence ID" value="BAH55173.1"/>
    <property type="molecule type" value="Genomic_DNA"/>
</dbReference>
<dbReference type="RefSeq" id="WP_005241702.1">
    <property type="nucleotide sequence ID" value="NC_012522.1"/>
</dbReference>
<dbReference type="SMR" id="C1B4I4"/>
<dbReference type="STRING" id="632772.ROP_69260"/>
<dbReference type="GeneID" id="69891556"/>
<dbReference type="KEGG" id="rop:ROP_69260"/>
<dbReference type="PATRIC" id="fig|632772.20.peg.7217"/>
<dbReference type="HOGENOM" id="CLU_074944_0_1_11"/>
<dbReference type="OrthoDB" id="9801844at2"/>
<dbReference type="UniPathway" id="UPA00345"/>
<dbReference type="Proteomes" id="UP000002212">
    <property type="component" value="Chromosome"/>
</dbReference>
<dbReference type="GO" id="GO:0005737">
    <property type="term" value="C:cytoplasm"/>
    <property type="evidence" value="ECO:0007669"/>
    <property type="project" value="UniProtKB-SubCell"/>
</dbReference>
<dbReference type="GO" id="GO:0003746">
    <property type="term" value="F:translation elongation factor activity"/>
    <property type="evidence" value="ECO:0007669"/>
    <property type="project" value="UniProtKB-UniRule"/>
</dbReference>
<dbReference type="GO" id="GO:0043043">
    <property type="term" value="P:peptide biosynthetic process"/>
    <property type="evidence" value="ECO:0007669"/>
    <property type="project" value="InterPro"/>
</dbReference>
<dbReference type="CDD" id="cd04470">
    <property type="entry name" value="S1_EF-P_repeat_1"/>
    <property type="match status" value="1"/>
</dbReference>
<dbReference type="CDD" id="cd05794">
    <property type="entry name" value="S1_EF-P_repeat_2"/>
    <property type="match status" value="1"/>
</dbReference>
<dbReference type="FunFam" id="2.30.30.30:FF:000003">
    <property type="entry name" value="Elongation factor P"/>
    <property type="match status" value="1"/>
</dbReference>
<dbReference type="FunFam" id="2.40.50.140:FF:000004">
    <property type="entry name" value="Elongation factor P"/>
    <property type="match status" value="1"/>
</dbReference>
<dbReference type="FunFam" id="2.40.50.140:FF:000009">
    <property type="entry name" value="Elongation factor P"/>
    <property type="match status" value="1"/>
</dbReference>
<dbReference type="Gene3D" id="2.30.30.30">
    <property type="match status" value="1"/>
</dbReference>
<dbReference type="Gene3D" id="2.40.50.140">
    <property type="entry name" value="Nucleic acid-binding proteins"/>
    <property type="match status" value="2"/>
</dbReference>
<dbReference type="HAMAP" id="MF_00141">
    <property type="entry name" value="EF_P"/>
    <property type="match status" value="1"/>
</dbReference>
<dbReference type="InterPro" id="IPR015365">
    <property type="entry name" value="Elong-fact-P_C"/>
</dbReference>
<dbReference type="InterPro" id="IPR012340">
    <property type="entry name" value="NA-bd_OB-fold"/>
</dbReference>
<dbReference type="InterPro" id="IPR014722">
    <property type="entry name" value="Rib_uL2_dom2"/>
</dbReference>
<dbReference type="InterPro" id="IPR020599">
    <property type="entry name" value="Transl_elong_fac_P/YeiP"/>
</dbReference>
<dbReference type="InterPro" id="IPR013185">
    <property type="entry name" value="Transl_elong_KOW-like"/>
</dbReference>
<dbReference type="InterPro" id="IPR001059">
    <property type="entry name" value="Transl_elong_P/YeiP_cen"/>
</dbReference>
<dbReference type="InterPro" id="IPR013852">
    <property type="entry name" value="Transl_elong_P/YeiP_CS"/>
</dbReference>
<dbReference type="InterPro" id="IPR011768">
    <property type="entry name" value="Transl_elongation_fac_P"/>
</dbReference>
<dbReference type="InterPro" id="IPR008991">
    <property type="entry name" value="Translation_prot_SH3-like_sf"/>
</dbReference>
<dbReference type="NCBIfam" id="TIGR00038">
    <property type="entry name" value="efp"/>
    <property type="match status" value="1"/>
</dbReference>
<dbReference type="NCBIfam" id="NF001810">
    <property type="entry name" value="PRK00529.1"/>
    <property type="match status" value="1"/>
</dbReference>
<dbReference type="PANTHER" id="PTHR30053">
    <property type="entry name" value="ELONGATION FACTOR P"/>
    <property type="match status" value="1"/>
</dbReference>
<dbReference type="PANTHER" id="PTHR30053:SF12">
    <property type="entry name" value="ELONGATION FACTOR P (EF-P) FAMILY PROTEIN"/>
    <property type="match status" value="1"/>
</dbReference>
<dbReference type="Pfam" id="PF01132">
    <property type="entry name" value="EFP"/>
    <property type="match status" value="1"/>
</dbReference>
<dbReference type="Pfam" id="PF08207">
    <property type="entry name" value="EFP_N"/>
    <property type="match status" value="1"/>
</dbReference>
<dbReference type="Pfam" id="PF09285">
    <property type="entry name" value="Elong-fact-P_C"/>
    <property type="match status" value="1"/>
</dbReference>
<dbReference type="PIRSF" id="PIRSF005901">
    <property type="entry name" value="EF-P"/>
    <property type="match status" value="1"/>
</dbReference>
<dbReference type="SMART" id="SM01185">
    <property type="entry name" value="EFP"/>
    <property type="match status" value="1"/>
</dbReference>
<dbReference type="SMART" id="SM00841">
    <property type="entry name" value="Elong-fact-P_C"/>
    <property type="match status" value="1"/>
</dbReference>
<dbReference type="SUPFAM" id="SSF50249">
    <property type="entry name" value="Nucleic acid-binding proteins"/>
    <property type="match status" value="2"/>
</dbReference>
<dbReference type="SUPFAM" id="SSF50104">
    <property type="entry name" value="Translation proteins SH3-like domain"/>
    <property type="match status" value="1"/>
</dbReference>
<dbReference type="PROSITE" id="PS01275">
    <property type="entry name" value="EFP"/>
    <property type="match status" value="1"/>
</dbReference>
<gene>
    <name evidence="1" type="primary">efp</name>
    <name type="ordered locus">ROP_69260</name>
</gene>